<gene>
    <name evidence="1" type="primary">ureB</name>
    <name type="ordered locus">NGR_c25030</name>
</gene>
<name>URE2_SINFN</name>
<organism>
    <name type="scientific">Sinorhizobium fredii (strain NBRC 101917 / NGR234)</name>
    <dbReference type="NCBI Taxonomy" id="394"/>
    <lineage>
        <taxon>Bacteria</taxon>
        <taxon>Pseudomonadati</taxon>
        <taxon>Pseudomonadota</taxon>
        <taxon>Alphaproteobacteria</taxon>
        <taxon>Hyphomicrobiales</taxon>
        <taxon>Rhizobiaceae</taxon>
        <taxon>Sinorhizobium/Ensifer group</taxon>
        <taxon>Sinorhizobium</taxon>
    </lineage>
</organism>
<comment type="catalytic activity">
    <reaction evidence="1">
        <text>urea + 2 H2O + H(+) = hydrogencarbonate + 2 NH4(+)</text>
        <dbReference type="Rhea" id="RHEA:20557"/>
        <dbReference type="ChEBI" id="CHEBI:15377"/>
        <dbReference type="ChEBI" id="CHEBI:15378"/>
        <dbReference type="ChEBI" id="CHEBI:16199"/>
        <dbReference type="ChEBI" id="CHEBI:17544"/>
        <dbReference type="ChEBI" id="CHEBI:28938"/>
        <dbReference type="EC" id="3.5.1.5"/>
    </reaction>
</comment>
<comment type="pathway">
    <text evidence="1">Nitrogen metabolism; urea degradation; CO(2) and NH(3) from urea (urease route): step 1/1.</text>
</comment>
<comment type="subunit">
    <text evidence="1">Heterotrimer of UreA (gamma), UreB (beta) and UreC (alpha) subunits. Three heterotrimers associate to form the active enzyme.</text>
</comment>
<comment type="subcellular location">
    <subcellularLocation>
        <location evidence="1">Cytoplasm</location>
    </subcellularLocation>
</comment>
<comment type="similarity">
    <text evidence="1">Belongs to the urease beta subunit family.</text>
</comment>
<accession>C3MGX4</accession>
<proteinExistence type="inferred from homology"/>
<protein>
    <recommendedName>
        <fullName evidence="1">Urease subunit beta</fullName>
        <ecNumber evidence="1">3.5.1.5</ecNumber>
    </recommendedName>
    <alternativeName>
        <fullName evidence="1">Urea amidohydrolase subunit beta</fullName>
    </alternativeName>
</protein>
<keyword id="KW-0963">Cytoplasm</keyword>
<keyword id="KW-0378">Hydrolase</keyword>
<keyword id="KW-1185">Reference proteome</keyword>
<sequence>MIPGEIIAAAGDIELNGGLPTITIEVSNSGDRPVQVGSHYHFAETNPGLIFDRDAARGRRLDIPAGTAVRFEPGQTRQVTLIPLSGKREVFGFRQQVMGKL</sequence>
<reference key="1">
    <citation type="journal article" date="2009" name="Appl. Environ. Microbiol.">
        <title>Rhizobium sp. strain NGR234 possesses a remarkable number of secretion systems.</title>
        <authorList>
            <person name="Schmeisser C."/>
            <person name="Liesegang H."/>
            <person name="Krysciak D."/>
            <person name="Bakkou N."/>
            <person name="Le Quere A."/>
            <person name="Wollherr A."/>
            <person name="Heinemeyer I."/>
            <person name="Morgenstern B."/>
            <person name="Pommerening-Roeser A."/>
            <person name="Flores M."/>
            <person name="Palacios R."/>
            <person name="Brenner S."/>
            <person name="Gottschalk G."/>
            <person name="Schmitz R.A."/>
            <person name="Broughton W.J."/>
            <person name="Perret X."/>
            <person name="Strittmatter A.W."/>
            <person name="Streit W.R."/>
        </authorList>
    </citation>
    <scope>NUCLEOTIDE SEQUENCE [LARGE SCALE GENOMIC DNA]</scope>
    <source>
        <strain>NBRC 101917 / NGR234</strain>
    </source>
</reference>
<feature type="chain" id="PRO_1000188939" description="Urease subunit beta">
    <location>
        <begin position="1"/>
        <end position="101"/>
    </location>
</feature>
<dbReference type="EC" id="3.5.1.5" evidence="1"/>
<dbReference type="EMBL" id="CP001389">
    <property type="protein sequence ID" value="ACP26260.1"/>
    <property type="molecule type" value="Genomic_DNA"/>
</dbReference>
<dbReference type="RefSeq" id="WP_012709018.1">
    <property type="nucleotide sequence ID" value="NC_012587.1"/>
</dbReference>
<dbReference type="RefSeq" id="YP_002827013.1">
    <property type="nucleotide sequence ID" value="NC_012587.1"/>
</dbReference>
<dbReference type="SMR" id="C3MGX4"/>
<dbReference type="STRING" id="394.NGR_c25030"/>
<dbReference type="KEGG" id="rhi:NGR_c25030"/>
<dbReference type="PATRIC" id="fig|394.7.peg.5324"/>
<dbReference type="eggNOG" id="COG0832">
    <property type="taxonomic scope" value="Bacteria"/>
</dbReference>
<dbReference type="HOGENOM" id="CLU_129707_1_1_5"/>
<dbReference type="OrthoDB" id="9797217at2"/>
<dbReference type="UniPathway" id="UPA00258">
    <property type="reaction ID" value="UER00370"/>
</dbReference>
<dbReference type="Proteomes" id="UP000001054">
    <property type="component" value="Chromosome"/>
</dbReference>
<dbReference type="GO" id="GO:0035550">
    <property type="term" value="C:urease complex"/>
    <property type="evidence" value="ECO:0007669"/>
    <property type="project" value="InterPro"/>
</dbReference>
<dbReference type="GO" id="GO:0009039">
    <property type="term" value="F:urease activity"/>
    <property type="evidence" value="ECO:0007669"/>
    <property type="project" value="UniProtKB-UniRule"/>
</dbReference>
<dbReference type="GO" id="GO:0043419">
    <property type="term" value="P:urea catabolic process"/>
    <property type="evidence" value="ECO:0007669"/>
    <property type="project" value="UniProtKB-UniRule"/>
</dbReference>
<dbReference type="CDD" id="cd00407">
    <property type="entry name" value="Urease_beta"/>
    <property type="match status" value="1"/>
</dbReference>
<dbReference type="FunFam" id="2.10.150.10:FF:000001">
    <property type="entry name" value="Urease subunit beta"/>
    <property type="match status" value="1"/>
</dbReference>
<dbReference type="Gene3D" id="2.10.150.10">
    <property type="entry name" value="Urease, beta subunit"/>
    <property type="match status" value="1"/>
</dbReference>
<dbReference type="HAMAP" id="MF_01954">
    <property type="entry name" value="Urease_beta"/>
    <property type="match status" value="1"/>
</dbReference>
<dbReference type="InterPro" id="IPR002019">
    <property type="entry name" value="Urease_beta-like"/>
</dbReference>
<dbReference type="InterPro" id="IPR036461">
    <property type="entry name" value="Urease_betasu_sf"/>
</dbReference>
<dbReference type="InterPro" id="IPR050069">
    <property type="entry name" value="Urease_subunit"/>
</dbReference>
<dbReference type="NCBIfam" id="NF009682">
    <property type="entry name" value="PRK13203.1"/>
    <property type="match status" value="1"/>
</dbReference>
<dbReference type="NCBIfam" id="TIGR00192">
    <property type="entry name" value="urease_beta"/>
    <property type="match status" value="1"/>
</dbReference>
<dbReference type="PANTHER" id="PTHR33569">
    <property type="entry name" value="UREASE"/>
    <property type="match status" value="1"/>
</dbReference>
<dbReference type="PANTHER" id="PTHR33569:SF1">
    <property type="entry name" value="UREASE"/>
    <property type="match status" value="1"/>
</dbReference>
<dbReference type="Pfam" id="PF00699">
    <property type="entry name" value="Urease_beta"/>
    <property type="match status" value="1"/>
</dbReference>
<dbReference type="SUPFAM" id="SSF51278">
    <property type="entry name" value="Urease, beta-subunit"/>
    <property type="match status" value="1"/>
</dbReference>
<evidence type="ECO:0000255" key="1">
    <source>
        <dbReference type="HAMAP-Rule" id="MF_01954"/>
    </source>
</evidence>